<evidence type="ECO:0000255" key="1"/>
<evidence type="ECO:0000269" key="2">
    <source>
    </source>
</evidence>
<evidence type="ECO:0000269" key="3">
    <source>
    </source>
</evidence>
<evidence type="ECO:0000305" key="4"/>
<name>GMA12_SCHPO</name>
<reference key="1">
    <citation type="journal article" date="1994" name="Mol. Biol. Cell">
        <title>Localization of an alpha 1,2 galactosyltransferase activity to the Golgi apparatus of Schizosaccharomyces pombe.</title>
        <authorList>
            <person name="Chappell T.G."/>
            <person name="Hajibagheri M.A.N."/>
            <person name="Ayscough K."/>
            <person name="Pierce M."/>
            <person name="Warren G."/>
        </authorList>
    </citation>
    <scope>NUCLEOTIDE SEQUENCE [GENOMIC DNA]</scope>
    <scope>PROTEIN SEQUENCE OF 35-42; 160-164; 174-178 AND 361-373</scope>
    <scope>FUNCTION</scope>
    <scope>SUBCELLULAR LOCATION</scope>
</reference>
<reference key="2">
    <citation type="journal article" date="2002" name="Nature">
        <title>The genome sequence of Schizosaccharomyces pombe.</title>
        <authorList>
            <person name="Wood V."/>
            <person name="Gwilliam R."/>
            <person name="Rajandream M.A."/>
            <person name="Lyne M.H."/>
            <person name="Lyne R."/>
            <person name="Stewart A."/>
            <person name="Sgouros J.G."/>
            <person name="Peat N."/>
            <person name="Hayles J."/>
            <person name="Baker S.G."/>
            <person name="Basham D."/>
            <person name="Bowman S."/>
            <person name="Brooks K."/>
            <person name="Brown D."/>
            <person name="Brown S."/>
            <person name="Chillingworth T."/>
            <person name="Churcher C.M."/>
            <person name="Collins M."/>
            <person name="Connor R."/>
            <person name="Cronin A."/>
            <person name="Davis P."/>
            <person name="Feltwell T."/>
            <person name="Fraser A."/>
            <person name="Gentles S."/>
            <person name="Goble A."/>
            <person name="Hamlin N."/>
            <person name="Harris D.E."/>
            <person name="Hidalgo J."/>
            <person name="Hodgson G."/>
            <person name="Holroyd S."/>
            <person name="Hornsby T."/>
            <person name="Howarth S."/>
            <person name="Huckle E.J."/>
            <person name="Hunt S."/>
            <person name="Jagels K."/>
            <person name="James K.D."/>
            <person name="Jones L."/>
            <person name="Jones M."/>
            <person name="Leather S."/>
            <person name="McDonald S."/>
            <person name="McLean J."/>
            <person name="Mooney P."/>
            <person name="Moule S."/>
            <person name="Mungall K.L."/>
            <person name="Murphy L.D."/>
            <person name="Niblett D."/>
            <person name="Odell C."/>
            <person name="Oliver K."/>
            <person name="O'Neil S."/>
            <person name="Pearson D."/>
            <person name="Quail M.A."/>
            <person name="Rabbinowitsch E."/>
            <person name="Rutherford K.M."/>
            <person name="Rutter S."/>
            <person name="Saunders D."/>
            <person name="Seeger K."/>
            <person name="Sharp S."/>
            <person name="Skelton J."/>
            <person name="Simmonds M.N."/>
            <person name="Squares R."/>
            <person name="Squares S."/>
            <person name="Stevens K."/>
            <person name="Taylor K."/>
            <person name="Taylor R.G."/>
            <person name="Tivey A."/>
            <person name="Walsh S.V."/>
            <person name="Warren T."/>
            <person name="Whitehead S."/>
            <person name="Woodward J.R."/>
            <person name="Volckaert G."/>
            <person name="Aert R."/>
            <person name="Robben J."/>
            <person name="Grymonprez B."/>
            <person name="Weltjens I."/>
            <person name="Vanstreels E."/>
            <person name="Rieger M."/>
            <person name="Schaefer M."/>
            <person name="Mueller-Auer S."/>
            <person name="Gabel C."/>
            <person name="Fuchs M."/>
            <person name="Duesterhoeft A."/>
            <person name="Fritzc C."/>
            <person name="Holzer E."/>
            <person name="Moestl D."/>
            <person name="Hilbert H."/>
            <person name="Borzym K."/>
            <person name="Langer I."/>
            <person name="Beck A."/>
            <person name="Lehrach H."/>
            <person name="Reinhardt R."/>
            <person name="Pohl T.M."/>
            <person name="Eger P."/>
            <person name="Zimmermann W."/>
            <person name="Wedler H."/>
            <person name="Wambutt R."/>
            <person name="Purnelle B."/>
            <person name="Goffeau A."/>
            <person name="Cadieu E."/>
            <person name="Dreano S."/>
            <person name="Gloux S."/>
            <person name="Lelaure V."/>
            <person name="Mottier S."/>
            <person name="Galibert F."/>
            <person name="Aves S.J."/>
            <person name="Xiang Z."/>
            <person name="Hunt C."/>
            <person name="Moore K."/>
            <person name="Hurst S.M."/>
            <person name="Lucas M."/>
            <person name="Rochet M."/>
            <person name="Gaillardin C."/>
            <person name="Tallada V.A."/>
            <person name="Garzon A."/>
            <person name="Thode G."/>
            <person name="Daga R.R."/>
            <person name="Cruzado L."/>
            <person name="Jimenez J."/>
            <person name="Sanchez M."/>
            <person name="del Rey F."/>
            <person name="Benito J."/>
            <person name="Dominguez A."/>
            <person name="Revuelta J.L."/>
            <person name="Moreno S."/>
            <person name="Armstrong J."/>
            <person name="Forsburg S.L."/>
            <person name="Cerutti L."/>
            <person name="Lowe T."/>
            <person name="McCombie W.R."/>
            <person name="Paulsen I."/>
            <person name="Potashkin J."/>
            <person name="Shpakovski G.V."/>
            <person name="Ussery D."/>
            <person name="Barrell B.G."/>
            <person name="Nurse P."/>
        </authorList>
    </citation>
    <scope>NUCLEOTIDE SEQUENCE [LARGE SCALE GENOMIC DNA]</scope>
    <source>
        <strain>972 / ATCC 24843</strain>
    </source>
</reference>
<reference key="3">
    <citation type="journal article" date="1998" name="Eur. J. Biochem.">
        <title>Differences in in vivo acceptor specificity of two galactosyltransferases, the gmh3+ and gma12+ gene products from Schizosaccharomyces pombe.</title>
        <authorList>
            <person name="Yoko-o T."/>
            <person name="Roy S.K."/>
            <person name="Jigami Y."/>
        </authorList>
    </citation>
    <scope>FUNCTION</scope>
</reference>
<comment type="function">
    <text evidence="2 3">Involved in the O- and N-linked oligosaccharide modification of proteins transported through the Golgi stack. This occurs in cis Golgi where the enzyme transfers galactose from UDP-galactose to a variety of mannose based acceptors.</text>
</comment>
<comment type="subcellular location">
    <subcellularLocation>
        <location evidence="2">Golgi apparatus membrane</location>
        <topology evidence="2">Single-pass type II membrane protein</topology>
    </subcellularLocation>
</comment>
<comment type="PTM">
    <text>O-glycosylated.</text>
</comment>
<comment type="similarity">
    <text evidence="4">Belongs to the glycosyltransferase 34 family.</text>
</comment>
<protein>
    <recommendedName>
        <fullName>Alpha-1,2-galactosyltransferase</fullName>
        <ecNumber>2.4.1.-</ecNumber>
    </recommendedName>
</protein>
<dbReference type="EC" id="2.4.1.-"/>
<dbReference type="EMBL" id="Z30917">
    <property type="protein sequence ID" value="CAA83200.1"/>
    <property type="molecule type" value="Genomic_DNA"/>
</dbReference>
<dbReference type="EMBL" id="CU329672">
    <property type="protein sequence ID" value="CAA19268.1"/>
    <property type="molecule type" value="Genomic_DNA"/>
</dbReference>
<dbReference type="PIR" id="T41561">
    <property type="entry name" value="T41561"/>
</dbReference>
<dbReference type="RefSeq" id="NP_587775.1">
    <property type="nucleotide sequence ID" value="NM_001022768.2"/>
</dbReference>
<dbReference type="SMR" id="Q09174"/>
<dbReference type="BioGRID" id="275673">
    <property type="interactions" value="138"/>
</dbReference>
<dbReference type="FunCoup" id="Q09174">
    <property type="interactions" value="116"/>
</dbReference>
<dbReference type="STRING" id="284812.Q09174"/>
<dbReference type="CAZy" id="GT34">
    <property type="family name" value="Glycosyltransferase Family 34"/>
</dbReference>
<dbReference type="SwissPalm" id="Q09174"/>
<dbReference type="PaxDb" id="4896-SPCC736.04c.1"/>
<dbReference type="EnsemblFungi" id="SPCC736.04c.1">
    <property type="protein sequence ID" value="SPCC736.04c.1:pep"/>
    <property type="gene ID" value="SPCC736.04c"/>
</dbReference>
<dbReference type="GeneID" id="2539101"/>
<dbReference type="KEGG" id="spo:2539101"/>
<dbReference type="PomBase" id="SPCC736.04c">
    <property type="gene designation" value="gma12"/>
</dbReference>
<dbReference type="VEuPathDB" id="FungiDB:SPCC736.04c"/>
<dbReference type="eggNOG" id="KOG4748">
    <property type="taxonomic scope" value="Eukaryota"/>
</dbReference>
<dbReference type="HOGENOM" id="CLU_045726_0_0_1"/>
<dbReference type="InParanoid" id="Q09174"/>
<dbReference type="OMA" id="WIWWLDH"/>
<dbReference type="PhylomeDB" id="Q09174"/>
<dbReference type="PRO" id="PR:Q09174"/>
<dbReference type="Proteomes" id="UP000002485">
    <property type="component" value="Chromosome III"/>
</dbReference>
<dbReference type="GO" id="GO:0005794">
    <property type="term" value="C:Golgi apparatus"/>
    <property type="evidence" value="ECO:0007005"/>
    <property type="project" value="PomBase"/>
</dbReference>
<dbReference type="GO" id="GO:0000139">
    <property type="term" value="C:Golgi membrane"/>
    <property type="evidence" value="ECO:0000314"/>
    <property type="project" value="CACAO"/>
</dbReference>
<dbReference type="GO" id="GO:0140497">
    <property type="term" value="C:mannan polymerase II complex"/>
    <property type="evidence" value="ECO:0000266"/>
    <property type="project" value="PomBase"/>
</dbReference>
<dbReference type="GO" id="GO:0031278">
    <property type="term" value="F:alpha-1,2-galactosyltransferase activity"/>
    <property type="evidence" value="ECO:0000314"/>
    <property type="project" value="PomBase"/>
</dbReference>
<dbReference type="GO" id="GO:0006487">
    <property type="term" value="P:protein N-linked glycosylation"/>
    <property type="evidence" value="ECO:0000315"/>
    <property type="project" value="PomBase"/>
</dbReference>
<dbReference type="GO" id="GO:0018279">
    <property type="term" value="P:protein N-linked glycosylation via asparagine"/>
    <property type="evidence" value="ECO:0000314"/>
    <property type="project" value="PomBase"/>
</dbReference>
<dbReference type="GO" id="GO:0006493">
    <property type="term" value="P:protein O-linked glycosylation"/>
    <property type="evidence" value="ECO:0000314"/>
    <property type="project" value="PomBase"/>
</dbReference>
<dbReference type="Gene3D" id="3.90.550.10">
    <property type="entry name" value="Spore Coat Polysaccharide Biosynthesis Protein SpsA, Chain A"/>
    <property type="match status" value="1"/>
</dbReference>
<dbReference type="InterPro" id="IPR008630">
    <property type="entry name" value="Glyco_trans_34"/>
</dbReference>
<dbReference type="InterPro" id="IPR029044">
    <property type="entry name" value="Nucleotide-diphossugar_trans"/>
</dbReference>
<dbReference type="PANTHER" id="PTHR31306:SF4">
    <property type="entry name" value="ALPHA-1,2-GALACTOSYLTRANSFERASE"/>
    <property type="match status" value="1"/>
</dbReference>
<dbReference type="PANTHER" id="PTHR31306">
    <property type="entry name" value="ALPHA-1,6-MANNOSYLTRANSFERASE MNN11-RELATED"/>
    <property type="match status" value="1"/>
</dbReference>
<dbReference type="Pfam" id="PF05637">
    <property type="entry name" value="Glyco_transf_34"/>
    <property type="match status" value="1"/>
</dbReference>
<keyword id="KW-0903">Direct protein sequencing</keyword>
<keyword id="KW-0325">Glycoprotein</keyword>
<keyword id="KW-0328">Glycosyltransferase</keyword>
<keyword id="KW-0333">Golgi apparatus</keyword>
<keyword id="KW-0472">Membrane</keyword>
<keyword id="KW-1185">Reference proteome</keyword>
<keyword id="KW-0735">Signal-anchor</keyword>
<keyword id="KW-0808">Transferase</keyword>
<keyword id="KW-0812">Transmembrane</keyword>
<keyword id="KW-1133">Transmembrane helix</keyword>
<proteinExistence type="evidence at protein level"/>
<sequence>MRFAPYLISAVVITTIILGGAWWTSAMDTKLQTKMKEIIDQHTSTWTPVVSSVTSTQTDTLRVTISEVVSVTATLTETFTATPTVTSVVHALATTDPHPDNSKIVILMGSNFQNDANSPLHPFAQSIIKNRREYAERHGYKFEFLDADAYASRVTGHLMPWVKVPMLQDTMKKYPDAEWIWWLDHDALVMNKDLNVVDHVLKHDRLNTILTREAEYKSGAGIPADGFRTPKDQDAKDVHFIISQDFNGINAGSLFIRNSEVGRWIVDLWFEPLYLDHIQGYAEQQAFSHMVFYHPQVYKHVGVVPLKAINAYDFDDNIWGYDDGDLCIHFAGCNYFKNCPEKFLKYAQILSSKQGSDWMSAQEKDHIQNLLKPSS</sequence>
<organism>
    <name type="scientific">Schizosaccharomyces pombe (strain 972 / ATCC 24843)</name>
    <name type="common">Fission yeast</name>
    <dbReference type="NCBI Taxonomy" id="284812"/>
    <lineage>
        <taxon>Eukaryota</taxon>
        <taxon>Fungi</taxon>
        <taxon>Dikarya</taxon>
        <taxon>Ascomycota</taxon>
        <taxon>Taphrinomycotina</taxon>
        <taxon>Schizosaccharomycetes</taxon>
        <taxon>Schizosaccharomycetales</taxon>
        <taxon>Schizosaccharomycetaceae</taxon>
        <taxon>Schizosaccharomyces</taxon>
    </lineage>
</organism>
<accession>Q09174</accession>
<gene>
    <name type="primary">gma12</name>
    <name type="ORF">SPCC736.04c</name>
</gene>
<feature type="chain" id="PRO_0000215163" description="Alpha-1,2-galactosyltransferase">
    <location>
        <begin position="1"/>
        <end position="375"/>
    </location>
</feature>
<feature type="topological domain" description="Cytoplasmic" evidence="1">
    <location>
        <begin position="1"/>
        <end position="2"/>
    </location>
</feature>
<feature type="transmembrane region" description="Helical; Signal-anchor for type II membrane protein" evidence="1">
    <location>
        <begin position="3"/>
        <end position="23"/>
    </location>
</feature>
<feature type="topological domain" description="Lumenal" evidence="1">
    <location>
        <begin position="24"/>
        <end position="375"/>
    </location>
</feature>
<feature type="sequence conflict" description="In Ref. 1; AA sequence." evidence="4" ref="1">
    <original>W</original>
    <variation>R</variation>
    <location>
        <position position="161"/>
    </location>
</feature>